<comment type="catalytic activity">
    <reaction evidence="1">
        <text>D-erythro-1-(imidazol-4-yl)glycerol 3-phosphate = 3-(imidazol-4-yl)-2-oxopropyl phosphate + H2O</text>
        <dbReference type="Rhea" id="RHEA:11040"/>
        <dbReference type="ChEBI" id="CHEBI:15377"/>
        <dbReference type="ChEBI" id="CHEBI:57766"/>
        <dbReference type="ChEBI" id="CHEBI:58278"/>
        <dbReference type="EC" id="4.2.1.19"/>
    </reaction>
</comment>
<comment type="pathway">
    <text evidence="1">Amino-acid biosynthesis; L-histidine biosynthesis; L-histidine from 5-phospho-alpha-D-ribose 1-diphosphate: step 6/9.</text>
</comment>
<comment type="subcellular location">
    <subcellularLocation>
        <location evidence="1">Cytoplasm</location>
    </subcellularLocation>
</comment>
<comment type="similarity">
    <text evidence="1">Belongs to the imidazoleglycerol-phosphate dehydratase family.</text>
</comment>
<keyword id="KW-0028">Amino-acid biosynthesis</keyword>
<keyword id="KW-0963">Cytoplasm</keyword>
<keyword id="KW-0368">Histidine biosynthesis</keyword>
<keyword id="KW-0456">Lyase</keyword>
<sequence>MTSSALVPSSAELCPDRTAEVSRTTAETRITVRVNLDGTGAASLHTGIGFFDHMLDQIARHGLIDLQIDCDGDLHIDGHHTVEDVGITLGQAFARAVGDKKGIRRYGHAYVPLDEALSRVVVDFSGRPGLHLHIPFTAGSIGGFDTQLTYEFFQGFVNHAGVTLHIDNLKGINAHHQCETVFKAFARALRAALERDPRAAGVIPSTKGSL</sequence>
<evidence type="ECO:0000255" key="1">
    <source>
        <dbReference type="HAMAP-Rule" id="MF_00076"/>
    </source>
</evidence>
<accession>A1W432</accession>
<dbReference type="EC" id="4.2.1.19" evidence="1"/>
<dbReference type="EMBL" id="CP000539">
    <property type="protein sequence ID" value="ABM41007.1"/>
    <property type="molecule type" value="Genomic_DNA"/>
</dbReference>
<dbReference type="SMR" id="A1W432"/>
<dbReference type="STRING" id="232721.Ajs_0763"/>
<dbReference type="KEGG" id="ajs:Ajs_0763"/>
<dbReference type="eggNOG" id="COG0131">
    <property type="taxonomic scope" value="Bacteria"/>
</dbReference>
<dbReference type="HOGENOM" id="CLU_044308_3_0_4"/>
<dbReference type="UniPathway" id="UPA00031">
    <property type="reaction ID" value="UER00011"/>
</dbReference>
<dbReference type="Proteomes" id="UP000000645">
    <property type="component" value="Chromosome"/>
</dbReference>
<dbReference type="GO" id="GO:0005737">
    <property type="term" value="C:cytoplasm"/>
    <property type="evidence" value="ECO:0007669"/>
    <property type="project" value="UniProtKB-SubCell"/>
</dbReference>
<dbReference type="GO" id="GO:0004424">
    <property type="term" value="F:imidazoleglycerol-phosphate dehydratase activity"/>
    <property type="evidence" value="ECO:0007669"/>
    <property type="project" value="UniProtKB-UniRule"/>
</dbReference>
<dbReference type="GO" id="GO:0000105">
    <property type="term" value="P:L-histidine biosynthetic process"/>
    <property type="evidence" value="ECO:0007669"/>
    <property type="project" value="UniProtKB-UniRule"/>
</dbReference>
<dbReference type="CDD" id="cd07914">
    <property type="entry name" value="IGPD"/>
    <property type="match status" value="1"/>
</dbReference>
<dbReference type="FunFam" id="3.30.230.40:FF:000002">
    <property type="entry name" value="Imidazoleglycerol-phosphate dehydratase"/>
    <property type="match status" value="1"/>
</dbReference>
<dbReference type="FunFam" id="3.30.230.40:FF:000003">
    <property type="entry name" value="Imidazoleglycerol-phosphate dehydratase HisB"/>
    <property type="match status" value="1"/>
</dbReference>
<dbReference type="Gene3D" id="3.30.230.40">
    <property type="entry name" value="Imidazole glycerol phosphate dehydratase, domain 1"/>
    <property type="match status" value="2"/>
</dbReference>
<dbReference type="HAMAP" id="MF_00076">
    <property type="entry name" value="HisB"/>
    <property type="match status" value="1"/>
</dbReference>
<dbReference type="InterPro" id="IPR038494">
    <property type="entry name" value="IGPD_sf"/>
</dbReference>
<dbReference type="InterPro" id="IPR000807">
    <property type="entry name" value="ImidazoleglycerolP_deHydtase"/>
</dbReference>
<dbReference type="InterPro" id="IPR020565">
    <property type="entry name" value="ImidazoleglycerP_deHydtase_CS"/>
</dbReference>
<dbReference type="InterPro" id="IPR020568">
    <property type="entry name" value="Ribosomal_Su5_D2-typ_SF"/>
</dbReference>
<dbReference type="NCBIfam" id="NF002106">
    <property type="entry name" value="PRK00951.1-1"/>
    <property type="match status" value="1"/>
</dbReference>
<dbReference type="NCBIfam" id="NF002109">
    <property type="entry name" value="PRK00951.1-5"/>
    <property type="match status" value="1"/>
</dbReference>
<dbReference type="NCBIfam" id="NF002111">
    <property type="entry name" value="PRK00951.2-1"/>
    <property type="match status" value="1"/>
</dbReference>
<dbReference type="NCBIfam" id="NF002114">
    <property type="entry name" value="PRK00951.2-4"/>
    <property type="match status" value="1"/>
</dbReference>
<dbReference type="PANTHER" id="PTHR23133:SF2">
    <property type="entry name" value="IMIDAZOLEGLYCEROL-PHOSPHATE DEHYDRATASE"/>
    <property type="match status" value="1"/>
</dbReference>
<dbReference type="PANTHER" id="PTHR23133">
    <property type="entry name" value="IMIDAZOLEGLYCEROL-PHOSPHATE DEHYDRATASE HIS7"/>
    <property type="match status" value="1"/>
</dbReference>
<dbReference type="Pfam" id="PF00475">
    <property type="entry name" value="IGPD"/>
    <property type="match status" value="1"/>
</dbReference>
<dbReference type="SUPFAM" id="SSF54211">
    <property type="entry name" value="Ribosomal protein S5 domain 2-like"/>
    <property type="match status" value="2"/>
</dbReference>
<dbReference type="PROSITE" id="PS00954">
    <property type="entry name" value="IGP_DEHYDRATASE_1"/>
    <property type="match status" value="1"/>
</dbReference>
<dbReference type="PROSITE" id="PS00955">
    <property type="entry name" value="IGP_DEHYDRATASE_2"/>
    <property type="match status" value="1"/>
</dbReference>
<reference key="1">
    <citation type="submission" date="2006-12" db="EMBL/GenBank/DDBJ databases">
        <title>Complete sequence of chromosome 1 of Acidovorax sp. JS42.</title>
        <authorList>
            <person name="Copeland A."/>
            <person name="Lucas S."/>
            <person name="Lapidus A."/>
            <person name="Barry K."/>
            <person name="Detter J.C."/>
            <person name="Glavina del Rio T."/>
            <person name="Dalin E."/>
            <person name="Tice H."/>
            <person name="Pitluck S."/>
            <person name="Chertkov O."/>
            <person name="Brettin T."/>
            <person name="Bruce D."/>
            <person name="Han C."/>
            <person name="Tapia R."/>
            <person name="Gilna P."/>
            <person name="Schmutz J."/>
            <person name="Larimer F."/>
            <person name="Land M."/>
            <person name="Hauser L."/>
            <person name="Kyrpides N."/>
            <person name="Kim E."/>
            <person name="Stahl D."/>
            <person name="Richardson P."/>
        </authorList>
    </citation>
    <scope>NUCLEOTIDE SEQUENCE [LARGE SCALE GENOMIC DNA]</scope>
    <source>
        <strain>JS42</strain>
    </source>
</reference>
<protein>
    <recommendedName>
        <fullName evidence="1">Imidazoleglycerol-phosphate dehydratase</fullName>
        <shortName evidence="1">IGPD</shortName>
        <ecNumber evidence="1">4.2.1.19</ecNumber>
    </recommendedName>
</protein>
<name>HIS7_ACISJ</name>
<feature type="chain" id="PRO_0000336290" description="Imidazoleglycerol-phosphate dehydratase">
    <location>
        <begin position="1"/>
        <end position="210"/>
    </location>
</feature>
<proteinExistence type="inferred from homology"/>
<organism>
    <name type="scientific">Acidovorax sp. (strain JS42)</name>
    <dbReference type="NCBI Taxonomy" id="232721"/>
    <lineage>
        <taxon>Bacteria</taxon>
        <taxon>Pseudomonadati</taxon>
        <taxon>Pseudomonadota</taxon>
        <taxon>Betaproteobacteria</taxon>
        <taxon>Burkholderiales</taxon>
        <taxon>Comamonadaceae</taxon>
        <taxon>Acidovorax</taxon>
    </lineage>
</organism>
<gene>
    <name evidence="1" type="primary">hisB</name>
    <name type="ordered locus">Ajs_0763</name>
</gene>